<gene>
    <name evidence="11" type="primary">VID28</name>
    <name evidence="12" type="synonym">GID5</name>
    <name evidence="14" type="ordered locus">YIL017C</name>
</gene>
<sequence>MTVAYSLENLKKISNSLVGDQLAKVDYFLAPKCQIFQCLLSIEQSDGVELKNAKLDLLYTLLHLEPQQRDIVGTYYFDIVSAIYKSMSLASSFTKNNSSTNYKYIKLLNLCAGVYPNCGFPDLQYLQNGFIQLVNHKFLRSKCKIDEVVTIIELLKLFLLVDEKNCSDFNKSKFMEEEREVTETSHYQDFKMAESLEHIIVKISSKYLDQISLKYIVRLKVSRPASPSSVKNDPFDNKGVDCTRAIPKKINISNMYDSSLLSLALLLYLRYHYMIPGDRKLRNDATFKMFVLGLLKSNDVNIRCVALKFLLQPYFTEDKKWEDTRTLEKILPYLVKSFNYDPLPWWFDPFDMLDSLIVLYNEITPMNNPVLTTLAHTNVIFCILSRFAQCLSLPQHNEATLKTTTKFIKICASFAASDEKYRLLLLNDTLLLNHLEYGLESHITLIQDFISLKDEIKETTTESHSMCLPPIYDHDFVAAWLLLLKSFSRSVSALRTTLKRNKIAQLLLQILSKTYTLTKECYFAGQDFMKPEIMIMGITLGSICNFVVEFSNLQSFMLRNGIIDIIEKMLTDPLFNSKKAWDDNEDERRIALQGIPVHEVKANSLWVLRHLMYNCQNEEKFQLLAKIPMNLILDFINDPCWAVQAQCFQLLRNLTCNSRKIVNILLEKFKDVEYKIDPQTGNKISIGSTYLFEFLAKKMRLLNPLDTQQKKAMEGILYIIVNLAAVNENKKQLVIEQDEILNIMSEILVETTTDSSSNGNDSNLKLACLWVLNNLLWNSSVSHYTQYAIENGLEPGHSPSDSENPQSTVTIGYNESVAGGYSRGKYYDEPDGDDSSSNANDDEDDDNDEGDDEGDEFVRTPAAKGSTSNVQVTRATVERCRKLVEVGLYDLVRKNITDESLSVREKARTLLYHMDLLLKVK</sequence>
<keyword id="KW-0002">3D-structure</keyword>
<keyword id="KW-0963">Cytoplasm</keyword>
<keyword id="KW-0539">Nucleus</keyword>
<keyword id="KW-0597">Phosphoprotein</keyword>
<keyword id="KW-1185">Reference proteome</keyword>
<keyword id="KW-0677">Repeat</keyword>
<keyword id="KW-0833">Ubl conjugation pathway</keyword>
<accession>P40547</accession>
<accession>D6VVR2</accession>
<feature type="chain" id="PRO_0000065828" description="GID complex subunit 5">
    <location>
        <begin position="1"/>
        <end position="921"/>
    </location>
</feature>
<feature type="repeat" description="ARM 1" evidence="1">
    <location>
        <begin position="491"/>
        <end position="530"/>
    </location>
</feature>
<feature type="repeat" description="ARM 2" evidence="1">
    <location>
        <begin position="551"/>
        <end position="592"/>
    </location>
</feature>
<feature type="repeat" description="ARM 3" evidence="1">
    <location>
        <begin position="617"/>
        <end position="656"/>
    </location>
</feature>
<feature type="repeat" description="ARM 4" evidence="1">
    <location>
        <begin position="683"/>
        <end position="725"/>
    </location>
</feature>
<feature type="repeat" description="ARM 5" evidence="1">
    <location>
        <begin position="729"/>
        <end position="777"/>
    </location>
</feature>
<feature type="region of interest" description="Disordered" evidence="2">
    <location>
        <begin position="822"/>
        <end position="867"/>
    </location>
</feature>
<feature type="compositionally biased region" description="Acidic residues" evidence="2">
    <location>
        <begin position="829"/>
        <end position="855"/>
    </location>
</feature>
<feature type="modified residue" description="Phosphoserine" evidence="18">
    <location>
        <position position="226"/>
    </location>
</feature>
<feature type="helix" evidence="19">
    <location>
        <begin position="7"/>
        <end position="17"/>
    </location>
</feature>
<feature type="helix" evidence="19">
    <location>
        <begin position="21"/>
        <end position="26"/>
    </location>
</feature>
<feature type="helix" evidence="19">
    <location>
        <begin position="30"/>
        <end position="34"/>
    </location>
</feature>
<feature type="helix" evidence="19">
    <location>
        <begin position="35"/>
        <end position="39"/>
    </location>
</feature>
<feature type="helix" evidence="19">
    <location>
        <begin position="48"/>
        <end position="61"/>
    </location>
</feature>
<feature type="helix" evidence="19">
    <location>
        <begin position="66"/>
        <end position="72"/>
    </location>
</feature>
<feature type="helix" evidence="19">
    <location>
        <begin position="75"/>
        <end position="85"/>
    </location>
</feature>
<feature type="turn" evidence="19">
    <location>
        <begin position="89"/>
        <end position="95"/>
    </location>
</feature>
<feature type="helix" evidence="19">
    <location>
        <begin position="98"/>
        <end position="114"/>
    </location>
</feature>
<feature type="helix" evidence="19">
    <location>
        <begin position="123"/>
        <end position="136"/>
    </location>
</feature>
<feature type="turn" evidence="19">
    <location>
        <begin position="137"/>
        <end position="141"/>
    </location>
</feature>
<feature type="helix" evidence="19">
    <location>
        <begin position="145"/>
        <end position="159"/>
    </location>
</feature>
<feature type="helix" evidence="19">
    <location>
        <begin position="183"/>
        <end position="204"/>
    </location>
</feature>
<feature type="helix" evidence="19">
    <location>
        <begin position="208"/>
        <end position="210"/>
    </location>
</feature>
<feature type="strand" evidence="19">
    <location>
        <begin position="214"/>
        <end position="218"/>
    </location>
</feature>
<feature type="turn" evidence="19">
    <location>
        <begin position="235"/>
        <end position="237"/>
    </location>
</feature>
<feature type="helix" evidence="19">
    <location>
        <begin position="255"/>
        <end position="271"/>
    </location>
</feature>
<feature type="helix" evidence="19">
    <location>
        <begin position="272"/>
        <end position="274"/>
    </location>
</feature>
<feature type="turn" evidence="20">
    <location>
        <begin position="281"/>
        <end position="283"/>
    </location>
</feature>
<feature type="helix" evidence="19">
    <location>
        <begin position="286"/>
        <end position="294"/>
    </location>
</feature>
<feature type="helix" evidence="19">
    <location>
        <begin position="300"/>
        <end position="316"/>
    </location>
</feature>
<feature type="strand" evidence="19">
    <location>
        <begin position="317"/>
        <end position="319"/>
    </location>
</feature>
<feature type="helix" evidence="19">
    <location>
        <begin position="320"/>
        <end position="322"/>
    </location>
</feature>
<feature type="helix" evidence="19">
    <location>
        <begin position="324"/>
        <end position="336"/>
    </location>
</feature>
<feature type="strand" evidence="19">
    <location>
        <begin position="339"/>
        <end position="342"/>
    </location>
</feature>
<feature type="helix" evidence="19">
    <location>
        <begin position="349"/>
        <end position="363"/>
    </location>
</feature>
<feature type="helix" evidence="19">
    <location>
        <begin position="369"/>
        <end position="376"/>
    </location>
</feature>
<feature type="helix" evidence="19">
    <location>
        <begin position="379"/>
        <end position="391"/>
    </location>
</feature>
<feature type="helix" evidence="19">
    <location>
        <begin position="398"/>
        <end position="415"/>
    </location>
</feature>
<feature type="helix" evidence="19">
    <location>
        <begin position="419"/>
        <end position="426"/>
    </location>
</feature>
<feature type="strand" evidence="20">
    <location>
        <begin position="428"/>
        <end position="430"/>
    </location>
</feature>
<feature type="helix" evidence="19">
    <location>
        <begin position="431"/>
        <end position="460"/>
    </location>
</feature>
<feature type="turn" evidence="19">
    <location>
        <begin position="461"/>
        <end position="463"/>
    </location>
</feature>
<feature type="helix" evidence="19">
    <location>
        <begin position="474"/>
        <end position="487"/>
    </location>
</feature>
<feature type="helix" evidence="19">
    <location>
        <begin position="491"/>
        <end position="495"/>
    </location>
</feature>
<feature type="helix" evidence="19">
    <location>
        <begin position="501"/>
        <end position="520"/>
    </location>
</feature>
<feature type="helix" evidence="19">
    <location>
        <begin position="522"/>
        <end position="524"/>
    </location>
</feature>
<feature type="turn" evidence="19">
    <location>
        <begin position="527"/>
        <end position="529"/>
    </location>
</feature>
<feature type="helix" evidence="19">
    <location>
        <begin position="530"/>
        <end position="546"/>
    </location>
</feature>
<feature type="strand" evidence="19">
    <location>
        <begin position="548"/>
        <end position="551"/>
    </location>
</feature>
<feature type="helix" evidence="19">
    <location>
        <begin position="554"/>
        <end position="559"/>
    </location>
</feature>
<feature type="helix" evidence="19">
    <location>
        <begin position="562"/>
        <end position="570"/>
    </location>
</feature>
<feature type="turn" evidence="19">
    <location>
        <begin position="573"/>
        <end position="575"/>
    </location>
</feature>
<feature type="helix" evidence="19">
    <location>
        <begin position="586"/>
        <end position="592"/>
    </location>
</feature>
<feature type="helix" evidence="19">
    <location>
        <begin position="599"/>
        <end position="611"/>
    </location>
</feature>
<feature type="turn" evidence="19">
    <location>
        <begin position="612"/>
        <end position="614"/>
    </location>
</feature>
<feature type="helix" evidence="19">
    <location>
        <begin position="617"/>
        <end position="626"/>
    </location>
</feature>
<feature type="helix" evidence="19">
    <location>
        <begin position="629"/>
        <end position="633"/>
    </location>
</feature>
<feature type="turn" evidence="19">
    <location>
        <begin position="634"/>
        <end position="637"/>
    </location>
</feature>
<feature type="helix" evidence="19">
    <location>
        <begin position="641"/>
        <end position="655"/>
    </location>
</feature>
<feature type="helix" evidence="19">
    <location>
        <begin position="659"/>
        <end position="667"/>
    </location>
</feature>
<feature type="helix" evidence="19">
    <location>
        <begin position="691"/>
        <end position="701"/>
    </location>
</feature>
<feature type="helix" evidence="19">
    <location>
        <begin position="707"/>
        <end position="724"/>
    </location>
</feature>
<feature type="helix" evidence="19">
    <location>
        <begin position="728"/>
        <end position="736"/>
    </location>
</feature>
<feature type="helix" evidence="19">
    <location>
        <begin position="739"/>
        <end position="748"/>
    </location>
</feature>
<feature type="helix" evidence="19">
    <location>
        <begin position="762"/>
        <end position="776"/>
    </location>
</feature>
<feature type="helix" evidence="20">
    <location>
        <begin position="779"/>
        <end position="786"/>
    </location>
</feature>
<feature type="turn" evidence="20">
    <location>
        <begin position="861"/>
        <end position="863"/>
    </location>
</feature>
<feature type="helix" evidence="19">
    <location>
        <begin position="875"/>
        <end position="885"/>
    </location>
</feature>
<feature type="helix" evidence="19">
    <location>
        <begin position="888"/>
        <end position="894"/>
    </location>
</feature>
<feature type="helix" evidence="19">
    <location>
        <begin position="895"/>
        <end position="897"/>
    </location>
</feature>
<feature type="helix" evidence="19">
    <location>
        <begin position="901"/>
        <end position="917"/>
    </location>
</feature>
<protein>
    <recommendedName>
        <fullName evidence="13">GID complex subunit 5</fullName>
    </recommendedName>
    <alternativeName>
        <fullName>Glucose-induced degradation protein 5</fullName>
    </alternativeName>
    <alternativeName>
        <fullName evidence="11">Vacuolar import and degradation protein 28</fullName>
    </alternativeName>
</protein>
<dbReference type="EMBL" id="Z46881">
    <property type="protein sequence ID" value="CAA86975.1"/>
    <property type="molecule type" value="Genomic_DNA"/>
</dbReference>
<dbReference type="EMBL" id="BK006942">
    <property type="protein sequence ID" value="DAA08528.1"/>
    <property type="molecule type" value="Genomic_DNA"/>
</dbReference>
<dbReference type="PIR" id="S49965">
    <property type="entry name" value="S49965"/>
</dbReference>
<dbReference type="RefSeq" id="NP_012247.3">
    <property type="nucleotide sequence ID" value="NM_001179367.3"/>
</dbReference>
<dbReference type="PDB" id="6SWY">
    <property type="method" value="EM"/>
    <property type="resolution" value="3.20 A"/>
    <property type="chains" value="5=1-921"/>
</dbReference>
<dbReference type="PDB" id="7NS3">
    <property type="method" value="EM"/>
    <property type="resolution" value="3.50 A"/>
    <property type="chains" value="5=1-921"/>
</dbReference>
<dbReference type="PDB" id="7WUG">
    <property type="method" value="EM"/>
    <property type="resolution" value="3.30 A"/>
    <property type="chains" value="5=1-921"/>
</dbReference>
<dbReference type="PDBsum" id="6SWY"/>
<dbReference type="PDBsum" id="7NS3"/>
<dbReference type="PDBsum" id="7WUG"/>
<dbReference type="EMDB" id="EMD-10333"/>
<dbReference type="EMDB" id="EMD-12559"/>
<dbReference type="EMDB" id="EMD-32830"/>
<dbReference type="SMR" id="P40547"/>
<dbReference type="BioGRID" id="34971">
    <property type="interactions" value="188"/>
</dbReference>
<dbReference type="ComplexPortal" id="CPX-301">
    <property type="entry name" value="GID E3 ubiquitin ligase complex, GID4 variant"/>
</dbReference>
<dbReference type="ComplexPortal" id="CPX-7884">
    <property type="entry name" value="GID E3 ubiquitin ligase complex, GID10 variant"/>
</dbReference>
<dbReference type="ComplexPortal" id="CPX-7885">
    <property type="entry name" value="GID E3 ubiquitin ligase complex, GID11 variant"/>
</dbReference>
<dbReference type="DIP" id="DIP-6335N"/>
<dbReference type="FunCoup" id="P40547">
    <property type="interactions" value="91"/>
</dbReference>
<dbReference type="IntAct" id="P40547">
    <property type="interactions" value="10"/>
</dbReference>
<dbReference type="MINT" id="P40547"/>
<dbReference type="STRING" id="4932.YIL017C"/>
<dbReference type="GlyGen" id="P40547">
    <property type="glycosylation" value="2 sites, 1 O-linked glycan (2 sites)"/>
</dbReference>
<dbReference type="iPTMnet" id="P40547"/>
<dbReference type="PaxDb" id="4932-YIL017C"/>
<dbReference type="PeptideAtlas" id="P40547"/>
<dbReference type="EnsemblFungi" id="YIL017C_mRNA">
    <property type="protein sequence ID" value="YIL017C"/>
    <property type="gene ID" value="YIL017C"/>
</dbReference>
<dbReference type="GeneID" id="854795"/>
<dbReference type="KEGG" id="sce:YIL017C"/>
<dbReference type="AGR" id="SGD:S000001279"/>
<dbReference type="SGD" id="S000001279">
    <property type="gene designation" value="VID28"/>
</dbReference>
<dbReference type="VEuPathDB" id="FungiDB:YIL017C"/>
<dbReference type="eggNOG" id="KOG1293">
    <property type="taxonomic scope" value="Eukaryota"/>
</dbReference>
<dbReference type="GeneTree" id="ENSGT00390000003033"/>
<dbReference type="HOGENOM" id="CLU_316687_0_0_1"/>
<dbReference type="InParanoid" id="P40547"/>
<dbReference type="OMA" id="LRHLMYN"/>
<dbReference type="OrthoDB" id="5559898at2759"/>
<dbReference type="BioCyc" id="YEAST:G3O-31293-MONOMER"/>
<dbReference type="Reactome" id="R-SCE-6798695">
    <property type="pathway name" value="Neutrophil degranulation"/>
</dbReference>
<dbReference type="Reactome" id="R-SCE-9861718">
    <property type="pathway name" value="Regulation of pyruvate metabolism"/>
</dbReference>
<dbReference type="BioGRID-ORCS" id="854795">
    <property type="hits" value="0 hits in 10 CRISPR screens"/>
</dbReference>
<dbReference type="PRO" id="PR:P40547"/>
<dbReference type="Proteomes" id="UP000002311">
    <property type="component" value="Chromosome IX"/>
</dbReference>
<dbReference type="RNAct" id="P40547">
    <property type="molecule type" value="protein"/>
</dbReference>
<dbReference type="GO" id="GO:0005737">
    <property type="term" value="C:cytoplasm"/>
    <property type="evidence" value="ECO:0007005"/>
    <property type="project" value="SGD"/>
</dbReference>
<dbReference type="GO" id="GO:0034657">
    <property type="term" value="C:GID complex"/>
    <property type="evidence" value="ECO:0000314"/>
    <property type="project" value="SGD"/>
</dbReference>
<dbReference type="GO" id="GO:0005634">
    <property type="term" value="C:nucleus"/>
    <property type="evidence" value="ECO:0007005"/>
    <property type="project" value="SGD"/>
</dbReference>
<dbReference type="GO" id="GO:0005773">
    <property type="term" value="C:vacuole"/>
    <property type="evidence" value="ECO:0007669"/>
    <property type="project" value="GOC"/>
</dbReference>
<dbReference type="GO" id="GO:0030437">
    <property type="term" value="P:ascospore formation"/>
    <property type="evidence" value="ECO:0007001"/>
    <property type="project" value="SGD"/>
</dbReference>
<dbReference type="GO" id="GO:0045721">
    <property type="term" value="P:negative regulation of gluconeogenesis"/>
    <property type="evidence" value="ECO:0000315"/>
    <property type="project" value="SGD"/>
</dbReference>
<dbReference type="GO" id="GO:0043161">
    <property type="term" value="P:proteasome-mediated ubiquitin-dependent protein catabolic process"/>
    <property type="evidence" value="ECO:0000315"/>
    <property type="project" value="SGD"/>
</dbReference>
<dbReference type="GO" id="GO:0007039">
    <property type="term" value="P:protein catabolic process in the vacuole"/>
    <property type="evidence" value="ECO:0000315"/>
    <property type="project" value="SGD"/>
</dbReference>
<dbReference type="FunFam" id="1.25.10.10:FF:000563">
    <property type="entry name" value="Vacuolar import and degradation protein"/>
    <property type="match status" value="1"/>
</dbReference>
<dbReference type="Gene3D" id="1.25.10.10">
    <property type="entry name" value="Leucine-rich Repeat Variant"/>
    <property type="match status" value="1"/>
</dbReference>
<dbReference type="InterPro" id="IPR011989">
    <property type="entry name" value="ARM-like"/>
</dbReference>
<dbReference type="InterPro" id="IPR016024">
    <property type="entry name" value="ARM-type_fold"/>
</dbReference>
<dbReference type="InterPro" id="IPR038739">
    <property type="entry name" value="ARMC8/Vid28"/>
</dbReference>
<dbReference type="PANTHER" id="PTHR15651">
    <property type="entry name" value="ARMADILLO REPEAT-CONTAINING PROTEIN 8"/>
    <property type="match status" value="1"/>
</dbReference>
<dbReference type="PANTHER" id="PTHR15651:SF7">
    <property type="entry name" value="ARMADILLO REPEAT-CONTAINING PROTEIN 8"/>
    <property type="match status" value="1"/>
</dbReference>
<dbReference type="SUPFAM" id="SSF48371">
    <property type="entry name" value="ARM repeat"/>
    <property type="match status" value="1"/>
</dbReference>
<reference key="1">
    <citation type="journal article" date="1997" name="Nature">
        <title>The nucleotide sequence of Saccharomyces cerevisiae chromosome IX.</title>
        <authorList>
            <person name="Churcher C.M."/>
            <person name="Bowman S."/>
            <person name="Badcock K."/>
            <person name="Bankier A.T."/>
            <person name="Brown D."/>
            <person name="Chillingworth T."/>
            <person name="Connor R."/>
            <person name="Devlin K."/>
            <person name="Gentles S."/>
            <person name="Hamlin N."/>
            <person name="Harris D.E."/>
            <person name="Horsnell T."/>
            <person name="Hunt S."/>
            <person name="Jagels K."/>
            <person name="Jones M."/>
            <person name="Lye G."/>
            <person name="Moule S."/>
            <person name="Odell C."/>
            <person name="Pearson D."/>
            <person name="Rajandream M.A."/>
            <person name="Rice P."/>
            <person name="Rowley N."/>
            <person name="Skelton J."/>
            <person name="Smith V."/>
            <person name="Walsh S.V."/>
            <person name="Whitehead S."/>
            <person name="Barrell B.G."/>
        </authorList>
    </citation>
    <scope>NUCLEOTIDE SEQUENCE [LARGE SCALE GENOMIC DNA]</scope>
    <source>
        <strain>ATCC 204508 / S288c</strain>
    </source>
</reference>
<reference key="2">
    <citation type="journal article" date="2014" name="G3 (Bethesda)">
        <title>The reference genome sequence of Saccharomyces cerevisiae: Then and now.</title>
        <authorList>
            <person name="Engel S.R."/>
            <person name="Dietrich F.S."/>
            <person name="Fisk D.G."/>
            <person name="Binkley G."/>
            <person name="Balakrishnan R."/>
            <person name="Costanzo M.C."/>
            <person name="Dwight S.S."/>
            <person name="Hitz B.C."/>
            <person name="Karra K."/>
            <person name="Nash R.S."/>
            <person name="Weng S."/>
            <person name="Wong E.D."/>
            <person name="Lloyd P."/>
            <person name="Skrzypek M.S."/>
            <person name="Miyasato S.R."/>
            <person name="Simison M."/>
            <person name="Cherry J.M."/>
        </authorList>
    </citation>
    <scope>GENOME REANNOTATION</scope>
    <source>
        <strain>ATCC 204508 / S288c</strain>
    </source>
</reference>
<reference key="3">
    <citation type="journal article" date="2002" name="Mol. Cell. Proteomics">
        <title>Systematic identification of the genes affecting glycogen storage in the yeast Saccharomyces cerevisiae: implication of the vacuole as a determinant of glycogen level.</title>
        <authorList>
            <person name="Wilson W.A."/>
            <person name="Wang Z."/>
            <person name="Roach P.J."/>
        </authorList>
    </citation>
    <scope>DISRUPTION PHENOTYPE</scope>
</reference>
<reference key="4">
    <citation type="journal article" date="2003" name="Mol. Biol. Cell">
        <title>Catabolite degradation of fructose-1,6-bisphosphatase in the yeast Saccharomyces cerevisiae: a genome-wide screen identifies eight novel GID genes and indicates the existence of two degradation pathways.</title>
        <authorList>
            <person name="Regelmann J."/>
            <person name="Schuele T."/>
            <person name="Josupeit F.S."/>
            <person name="Horak J."/>
            <person name="Rose M."/>
            <person name="Entian K.-D."/>
            <person name="Thumm M."/>
            <person name="Wolf D.H."/>
        </authorList>
    </citation>
    <scope>FUNCTION</scope>
</reference>
<reference key="5">
    <citation type="journal article" date="2003" name="Nature">
        <title>Global analysis of protein localization in budding yeast.</title>
        <authorList>
            <person name="Huh W.-K."/>
            <person name="Falvo J.V."/>
            <person name="Gerke L.C."/>
            <person name="Carroll A.S."/>
            <person name="Howson R.W."/>
            <person name="Weissman J.S."/>
            <person name="O'Shea E.K."/>
        </authorList>
    </citation>
    <scope>SUBCELLULAR LOCATION [LARGE SCALE ANALYSIS]</scope>
</reference>
<reference key="6">
    <citation type="journal article" date="2006" name="BMC Bioinformatics">
        <title>PIPE: a protein-protein interaction prediction engine based on the re-occurring short polypeptide sequences between known interacting protein pairs.</title>
        <authorList>
            <person name="Pitre S."/>
            <person name="Dehne F."/>
            <person name="Chan A."/>
            <person name="Cheetham J."/>
            <person name="Duong A."/>
            <person name="Emili A."/>
            <person name="Gebbia M."/>
            <person name="Greenblatt J."/>
            <person name="Jessulat M."/>
            <person name="Krogan N."/>
            <person name="Luo X."/>
            <person name="Golshani A."/>
        </authorList>
    </citation>
    <scope>IDENTIFICATION IN GID COMPLEX</scope>
</reference>
<reference key="7">
    <citation type="journal article" date="2008" name="Mol. Biol. Cell">
        <title>The yeast GID complex, a novel ubiquitin ligase (E3) involved in the regulation of carbohydrate metabolism.</title>
        <authorList>
            <person name="Santt O."/>
            <person name="Pfirrmann T."/>
            <person name="Braun B."/>
            <person name="Juretschke J."/>
            <person name="Kimmig P."/>
            <person name="Scheel H."/>
            <person name="Hofmann K."/>
            <person name="Thumm M."/>
            <person name="Wolf D.H."/>
        </authorList>
    </citation>
    <scope>IDENTIFICATION IN GID COMPLEX</scope>
</reference>
<reference key="8">
    <citation type="journal article" date="2008" name="Mol. Cell. Proteomics">
        <title>A multidimensional chromatography technology for in-depth phosphoproteome analysis.</title>
        <authorList>
            <person name="Albuquerque C.P."/>
            <person name="Smolka M.B."/>
            <person name="Payne S.H."/>
            <person name="Bafna V."/>
            <person name="Eng J."/>
            <person name="Zhou H."/>
        </authorList>
    </citation>
    <scope>PHOSPHORYLATION [LARGE SCALE ANALYSIS] AT SER-226</scope>
    <scope>IDENTIFICATION BY MASS SPECTROMETRY [LARGE SCALE ANALYSIS]</scope>
</reference>
<reference key="9">
    <citation type="journal article" date="2012" name="J. Biol. Chem.">
        <title>Exploring the topology of the Gid complex, the E3 ubiquitin ligase involved in catabolite-induced degradation of gluconeogenic enzymes.</title>
        <authorList>
            <person name="Menssen R."/>
            <person name="Schweiggert J."/>
            <person name="Schreiner J."/>
            <person name="Kusevic D."/>
            <person name="Reuther J."/>
            <person name="Braun B."/>
            <person name="Wolf D.H."/>
        </authorList>
    </citation>
    <scope>SUBUNIT</scope>
    <scope>INTERACTION WITH VID24/GID4; RMD5 AND FYV10</scope>
</reference>
<reference evidence="15" key="10">
    <citation type="journal article" date="2020" name="Mol. Cell">
        <title>Interconversion between anticipatory and active GID E3 ubiquitin ligase conformations via metabolically driven substrate receptor assembly.</title>
        <authorList>
            <person name="Qiao S."/>
            <person name="Langlois C.R."/>
            <person name="Chrustowicz J."/>
            <person name="Sherpa D."/>
            <person name="Karayel O."/>
            <person name="Hansen F.M."/>
            <person name="Beier V."/>
            <person name="von Gronau S."/>
            <person name="Bollschweiler D."/>
            <person name="Schafer T."/>
            <person name="Alpi A.F."/>
            <person name="Mann M."/>
            <person name="Prabu J.R."/>
            <person name="Schulman B.A."/>
        </authorList>
    </citation>
    <scope>STRUCTURE BY ELECTRON MICROSCOPY (3.20 ANGSTROMS)</scope>
</reference>
<reference evidence="16" key="11">
    <citation type="journal article" date="2021" name="Mol. Cell">
        <title>GID E3 ligase supramolecular chelate assembly configures multipronged ubiquitin targeting of an oligomeric metabolic enzyme.</title>
        <authorList>
            <person name="Sherpa D."/>
            <person name="Chrustowicz J."/>
            <person name="Qiao S."/>
            <person name="Langlois C.R."/>
            <person name="Hehl L.A."/>
            <person name="Gottemukkala K.V."/>
            <person name="Hansen F.M."/>
            <person name="Karayel O."/>
            <person name="von Gronau S."/>
            <person name="Prabu J.R."/>
            <person name="Mann M."/>
            <person name="Alpi A.F."/>
            <person name="Schulman B.A."/>
        </authorList>
    </citation>
    <scope>STRUCTURE BY ELECTRON MICROSCOPY (3.50 ANGSTROMS)</scope>
</reference>
<reference evidence="17" key="12">
    <citation type="journal article" date="2022" name="Nat. Commun.">
        <title>Cryo-EM structures of Gid12-bound GID E3 reveal steric blockade as a mechanism inhibiting substrate ubiquitylation.</title>
        <authorList>
            <person name="Qiao S."/>
            <person name="Lee C.W."/>
            <person name="Sherpa D."/>
            <person name="Chrustowicz J."/>
            <person name="Cheng J."/>
            <person name="Duennebacke M."/>
            <person name="Steigenberger B."/>
            <person name="Karayel O."/>
            <person name="Vu D.T."/>
            <person name="von Gronau S."/>
            <person name="Mann M."/>
            <person name="Wilfling F."/>
            <person name="Schulman B.A."/>
        </authorList>
    </citation>
    <scope>STRUCTURE BY ELECTRON MICROSCOPY (3.30 ANGSTROMS)</scope>
</reference>
<proteinExistence type="evidence at protein level"/>
<evidence type="ECO:0000255" key="1"/>
<evidence type="ECO:0000256" key="2">
    <source>
        <dbReference type="SAM" id="MobiDB-lite"/>
    </source>
</evidence>
<evidence type="ECO:0000269" key="3">
    <source>
    </source>
</evidence>
<evidence type="ECO:0000269" key="4">
    <source>
    </source>
</evidence>
<evidence type="ECO:0000269" key="5">
    <source>
    </source>
</evidence>
<evidence type="ECO:0000269" key="6">
    <source>
    </source>
</evidence>
<evidence type="ECO:0000269" key="7">
    <source>
    </source>
</evidence>
<evidence type="ECO:0000269" key="8">
    <source>
    </source>
</evidence>
<evidence type="ECO:0000269" key="9">
    <source>
    </source>
</evidence>
<evidence type="ECO:0000269" key="10">
    <source>
    </source>
</evidence>
<evidence type="ECO:0000303" key="11">
    <source>
    </source>
</evidence>
<evidence type="ECO:0000303" key="12">
    <source>
    </source>
</evidence>
<evidence type="ECO:0000305" key="13"/>
<evidence type="ECO:0000312" key="14">
    <source>
        <dbReference type="SGD" id="S000001279"/>
    </source>
</evidence>
<evidence type="ECO:0007744" key="15">
    <source>
        <dbReference type="PDB" id="6SWY"/>
    </source>
</evidence>
<evidence type="ECO:0007744" key="16">
    <source>
        <dbReference type="PDB" id="7NS3"/>
    </source>
</evidence>
<evidence type="ECO:0007744" key="17">
    <source>
        <dbReference type="PDB" id="7WUG"/>
    </source>
</evidence>
<evidence type="ECO:0007744" key="18">
    <source>
    </source>
</evidence>
<evidence type="ECO:0007829" key="19">
    <source>
        <dbReference type="PDB" id="6SWY"/>
    </source>
</evidence>
<evidence type="ECO:0007829" key="20">
    <source>
        <dbReference type="PDB" id="7WUG"/>
    </source>
</evidence>
<comment type="function">
    <text evidence="4 8 9">Component of the GID E3 ligase complex recruiting N termini and catalyzing ubiquitination of proteins targeted for degradation. GID E3 is regulated through assembly with interchangeable N-degron-binding substrate receptors induced by distinct environmental perturbations (PubMed:12686616, PubMed:31708416). Required for the adaptation to the presence of glucose in the growth medium; mediates in association with the substrate receptor VID24/GID4 the degradation of enzymes involved in gluconeogenesis when cells are shifted to glucose-containing medium (PubMed:12686616, PubMed:31708416). Required for proteasome-dependent catabolite degradation of fructose-1,6-bisphosphatase (FBP1), malate dehydrogenase (MDH2), and other gluconeogenic enzymes (PubMed:12686616, PubMed:22645139).</text>
</comment>
<comment type="subunit">
    <text evidence="6 7 8 9 10">Identified in the GID/CTLH complex (PubMed:16872538, PubMed:18508925). In the absence of stress, the complex exists as an inactive anticipatory complex (GID(Ant)), composed of VID30/GID1, the E3 ubiquitin-ligase RMD5/GID2, VID28/GID5, GID8, and the RING-like subunit FYV10/GID9, awaiting a substrate receptor to form the active E3 ligase complex. When cells are shifted to glucose-containing medium, the substrate receptor VID24/GID4 is induced and becomes part of the complex, named GID(SR4) (PubMed:18508925, PubMed:22645139, PubMed:31708416). Additionally, GID7 transforms the GID(SR4) E3 ligase core into a higher-order supramolecular assembly (Chelator-GID(SR4)) specifically tailored for FBP1 ubiquitination (PubMed:33905682). Under osmotic or heat stress, the substrate receptor GID10 is induced and becomes part of the complex, named GID(SR10) (PubMed:31708416). Within the GID complex, interacts directly with RMD5/GID2 and FYV10/GID9, and recruits VID24/GID4 to the complex when cells are shifted to glucose-containing medium (PubMed:22645139).</text>
</comment>
<comment type="interaction">
    <interactant intactId="EBI-24957">
        <id>P40547</id>
    </interactant>
    <interactant intactId="EBI-20304">
        <id>P38263</id>
        <label>VID24</label>
    </interactant>
    <organismsDiffer>false</organismsDiffer>
    <experiments>2</experiments>
</comment>
<comment type="interaction">
    <interactant intactId="EBI-24957">
        <id>P40547</id>
    </interactant>
    <interactant intactId="EBI-24173">
        <id>P53076</id>
        <label>VID30</label>
    </interactant>
    <organismsDiffer>false</organismsDiffer>
    <experiments>11</experiments>
</comment>
<comment type="subcellular location">
    <subcellularLocation>
        <location evidence="5">Nucleus</location>
    </subcellularLocation>
    <subcellularLocation>
        <location evidence="5">Cytoplasm</location>
    </subcellularLocation>
</comment>
<comment type="disruption phenotype">
    <text evidence="3">Negatively affects glycogen accumulation.</text>
</comment>
<comment type="similarity">
    <text evidence="13">Belongs to the VID28/GID5 family.</text>
</comment>
<organism>
    <name type="scientific">Saccharomyces cerevisiae (strain ATCC 204508 / S288c)</name>
    <name type="common">Baker's yeast</name>
    <dbReference type="NCBI Taxonomy" id="559292"/>
    <lineage>
        <taxon>Eukaryota</taxon>
        <taxon>Fungi</taxon>
        <taxon>Dikarya</taxon>
        <taxon>Ascomycota</taxon>
        <taxon>Saccharomycotina</taxon>
        <taxon>Saccharomycetes</taxon>
        <taxon>Saccharomycetales</taxon>
        <taxon>Saccharomycetaceae</taxon>
        <taxon>Saccharomyces</taxon>
    </lineage>
</organism>
<name>VID28_YEAST</name>